<organism>
    <name type="scientific">Saccharomyces cerevisiae (strain ATCC 204508 / S288c)</name>
    <name type="common">Baker's yeast</name>
    <dbReference type="NCBI Taxonomy" id="559292"/>
    <lineage>
        <taxon>Eukaryota</taxon>
        <taxon>Fungi</taxon>
        <taxon>Dikarya</taxon>
        <taxon>Ascomycota</taxon>
        <taxon>Saccharomycotina</taxon>
        <taxon>Saccharomycetes</taxon>
        <taxon>Saccharomycetales</taxon>
        <taxon>Saccharomycetaceae</taxon>
        <taxon>Saccharomyces</taxon>
    </lineage>
</organism>
<evidence type="ECO:0000305" key="1"/>
<evidence type="ECO:0000305" key="2">
    <source>
    </source>
</evidence>
<protein>
    <recommendedName>
        <fullName>Putative uncharacterized protein YKL136W</fullName>
    </recommendedName>
</protein>
<sequence length="132" mass="14288">MYGIILKFTTTDVYSQNKSRRSCDTILPPETSGLFLPPEDIPFESPPSFSSFNPCTALVSFVFICVASSDGPKSNKSSKSPKVVKVFSIPAFVFVTSSLSSKSNSTSSLALLEISFFAMLSNSSICFPLTIF</sequence>
<proteinExistence type="uncertain"/>
<gene>
    <name type="ordered locus">YKL136W</name>
</gene>
<accession>P36065</accession>
<dbReference type="EMBL" id="Z28135">
    <property type="protein sequence ID" value="CAA81976.1"/>
    <property type="molecule type" value="Genomic_DNA"/>
</dbReference>
<dbReference type="PIR" id="S37965">
    <property type="entry name" value="S37965"/>
</dbReference>
<dbReference type="PaxDb" id="4932-YKL136W"/>
<dbReference type="EnsemblFungi" id="YKL136W_mRNA">
    <property type="protein sequence ID" value="YKL136W"/>
    <property type="gene ID" value="YKL136W"/>
</dbReference>
<dbReference type="AGR" id="SGD:S000001619"/>
<dbReference type="SGD" id="S000001619">
    <property type="gene designation" value="YKL136W"/>
</dbReference>
<dbReference type="HOGENOM" id="CLU_1918709_0_0_1"/>
<name>YKN6_YEAST</name>
<reference key="1">
    <citation type="journal article" date="1994" name="Nature">
        <title>Complete DNA sequence of yeast chromosome XI.</title>
        <authorList>
            <person name="Dujon B."/>
            <person name="Alexandraki D."/>
            <person name="Andre B."/>
            <person name="Ansorge W."/>
            <person name="Baladron V."/>
            <person name="Ballesta J.P.G."/>
            <person name="Banrevi A."/>
            <person name="Bolle P.-A."/>
            <person name="Bolotin-Fukuhara M."/>
            <person name="Bossier P."/>
            <person name="Bou G."/>
            <person name="Boyer J."/>
            <person name="Buitrago M.J."/>
            <person name="Cheret G."/>
            <person name="Colleaux L."/>
            <person name="Daignan-Fornier B."/>
            <person name="del Rey F."/>
            <person name="Dion C."/>
            <person name="Domdey H."/>
            <person name="Duesterhoeft A."/>
            <person name="Duesterhus S."/>
            <person name="Entian K.-D."/>
            <person name="Erfle H."/>
            <person name="Esteban P.F."/>
            <person name="Feldmann H."/>
            <person name="Fernandes L."/>
            <person name="Fobo G.M."/>
            <person name="Fritz C."/>
            <person name="Fukuhara H."/>
            <person name="Gabel C."/>
            <person name="Gaillon L."/>
            <person name="Garcia-Cantalejo J.M."/>
            <person name="Garcia-Ramirez J.J."/>
            <person name="Gent M.E."/>
            <person name="Ghazvini M."/>
            <person name="Goffeau A."/>
            <person name="Gonzalez A."/>
            <person name="Grothues D."/>
            <person name="Guerreiro P."/>
            <person name="Hegemann J.H."/>
            <person name="Hewitt N."/>
            <person name="Hilger F."/>
            <person name="Hollenberg C.P."/>
            <person name="Horaitis O."/>
            <person name="Indge K.J."/>
            <person name="Jacquier A."/>
            <person name="James C.M."/>
            <person name="Jauniaux J.-C."/>
            <person name="Jimenez A."/>
            <person name="Keuchel H."/>
            <person name="Kirchrath L."/>
            <person name="Kleine K."/>
            <person name="Koetter P."/>
            <person name="Legrain P."/>
            <person name="Liebl S."/>
            <person name="Louis E.J."/>
            <person name="Maia e Silva A."/>
            <person name="Marck C."/>
            <person name="Monnier A.-L."/>
            <person name="Moestl D."/>
            <person name="Mueller S."/>
            <person name="Obermaier B."/>
            <person name="Oliver S.G."/>
            <person name="Pallier C."/>
            <person name="Pascolo S."/>
            <person name="Pfeiffer F."/>
            <person name="Philippsen P."/>
            <person name="Planta R.J."/>
            <person name="Pohl F.M."/>
            <person name="Pohl T.M."/>
            <person name="Poehlmann R."/>
            <person name="Portetelle D."/>
            <person name="Purnelle B."/>
            <person name="Puzos V."/>
            <person name="Ramezani Rad M."/>
            <person name="Rasmussen S.W."/>
            <person name="Remacha M.A."/>
            <person name="Revuelta J.L."/>
            <person name="Richard G.-F."/>
            <person name="Rieger M."/>
            <person name="Rodrigues-Pousada C."/>
            <person name="Rose M."/>
            <person name="Rupp T."/>
            <person name="Santos M.A."/>
            <person name="Schwager C."/>
            <person name="Sensen C."/>
            <person name="Skala J."/>
            <person name="Soares H."/>
            <person name="Sor F."/>
            <person name="Stegemann J."/>
            <person name="Tettelin H."/>
            <person name="Thierry A."/>
            <person name="Tzermia M."/>
            <person name="Urrestarazu L.A."/>
            <person name="van Dyck L."/>
            <person name="van Vliet-Reedijk J.C."/>
            <person name="Valens M."/>
            <person name="Vandenbol M."/>
            <person name="Vilela C."/>
            <person name="Vissers S."/>
            <person name="von Wettstein D."/>
            <person name="Voss H."/>
            <person name="Wiemann S."/>
            <person name="Xu G."/>
            <person name="Zimmermann J."/>
            <person name="Haasemann M."/>
            <person name="Becker I."/>
            <person name="Mewes H.-W."/>
        </authorList>
    </citation>
    <scope>NUCLEOTIDE SEQUENCE [LARGE SCALE GENOMIC DNA]</scope>
    <source>
        <strain>ATCC 204508 / S288c</strain>
    </source>
</reference>
<reference key="2">
    <citation type="journal article" date="2014" name="G3 (Bethesda)">
        <title>The reference genome sequence of Saccharomyces cerevisiae: Then and now.</title>
        <authorList>
            <person name="Engel S.R."/>
            <person name="Dietrich F.S."/>
            <person name="Fisk D.G."/>
            <person name="Binkley G."/>
            <person name="Balakrishnan R."/>
            <person name="Costanzo M.C."/>
            <person name="Dwight S.S."/>
            <person name="Hitz B.C."/>
            <person name="Karra K."/>
            <person name="Nash R.S."/>
            <person name="Weng S."/>
            <person name="Wong E.D."/>
            <person name="Lloyd P."/>
            <person name="Skrzypek M.S."/>
            <person name="Miyasato S.R."/>
            <person name="Simison M."/>
            <person name="Cherry J.M."/>
        </authorList>
    </citation>
    <scope>GENOME REANNOTATION</scope>
    <source>
        <strain>ATCC 204508 / S288c</strain>
    </source>
</reference>
<comment type="miscellaneous">
    <text evidence="1">Partially overlaps APL2.</text>
</comment>
<comment type="caution">
    <text evidence="2">Product of a dubious gene prediction unlikely to encode a functional protein. Because of that it is not part of the S.cerevisiae S288c complete/reference proteome set.</text>
</comment>
<feature type="chain" id="PRO_0000203148" description="Putative uncharacterized protein YKL136W">
    <location>
        <begin position="1"/>
        <end position="132"/>
    </location>
</feature>